<comment type="function">
    <text evidence="1 8 11 17 21">Uniporter that mediates the facilitative transport of nucleoside across lysosomal and mitochondrial membranes (PubMed:15701636, PubMed:19164483, PubMed:20595384, PubMed:28729424). Functions as a non-electrogenic Na(+)-independent transporter (PubMed:15701636, PubMed:19164483, PubMed:28729424). Substrate transport is pH-dependent and enhanced under acidic condition, probably reflecting the location of the transporter in acidic intracellular compartments (PubMed:15701636, PubMed:19164483, PubMed:28729424). Proton is not a cotransporting ion but most likely change the ionization state of the transporter which dictates transport-permissible/impermissible conformation for nucleoside translocation (PubMed:28729424). May direct the nucleoside transport from lysosomes to cytosol or cytosol to mitochondria to facilitate the fundamental function of salvage synthesis of nucleic acids (PubMed:28729424). Involved in the transport of nucleosides (adenosine, guanosine, uridine, thymidine, cytidine and inosine) and deoxynucleosides (deoxyadenosine, deoxycytidine) (PubMed:15701636, PubMed:19164483, PubMed:20595384, PubMed:28729424). Also mediates transport of purine nucleobases (adenine, guanine) and pyrimidine nucleobases (uracil) (PubMed:15701636, PubMed:19164483). Also able to transport monoamine neurotransmitters dopamine, serotonin, noradrenaline and tyramine (PubMed:19164483). Capable of transporting ATP (PubMed:19164483). Mediates nucleoside export from lysosomes in macrophages, which regulates macrophage functions and numbers (By similarity).</text>
</comment>
<comment type="catalytic activity">
    <reaction evidence="8 11 17 21">
        <text>adenosine(in) = adenosine(out)</text>
        <dbReference type="Rhea" id="RHEA:75343"/>
        <dbReference type="ChEBI" id="CHEBI:16335"/>
    </reaction>
</comment>
<comment type="catalytic activity">
    <reaction evidence="11 21">
        <text>guanosine(in) = guanosine(out)</text>
        <dbReference type="Rhea" id="RHEA:75371"/>
        <dbReference type="ChEBI" id="CHEBI:16750"/>
    </reaction>
</comment>
<comment type="catalytic activity">
    <reaction evidence="11 21">
        <text>inosine(in) = inosine(out)</text>
        <dbReference type="Rhea" id="RHEA:75375"/>
        <dbReference type="ChEBI" id="CHEBI:17596"/>
    </reaction>
</comment>
<comment type="catalytic activity">
    <reaction evidence="8 11 21">
        <text>uridine(out) = uridine(in)</text>
        <dbReference type="Rhea" id="RHEA:71519"/>
        <dbReference type="ChEBI" id="CHEBI:16704"/>
    </reaction>
</comment>
<comment type="catalytic activity">
    <reaction evidence="11">
        <text>cytidine(in) = cytidine(out)</text>
        <dbReference type="Rhea" id="RHEA:75367"/>
        <dbReference type="ChEBI" id="CHEBI:17562"/>
    </reaction>
</comment>
<comment type="catalytic activity">
    <reaction evidence="11 21">
        <text>thymidine(in) = thymidine(out)</text>
        <dbReference type="Rhea" id="RHEA:75363"/>
        <dbReference type="ChEBI" id="CHEBI:17748"/>
    </reaction>
</comment>
<comment type="catalytic activity">
    <reaction evidence="11">
        <text>2'-deoxyadenosine(in) = 2'-deoxyadenosine(out)</text>
        <dbReference type="Rhea" id="RHEA:75691"/>
        <dbReference type="ChEBI" id="CHEBI:17256"/>
    </reaction>
</comment>
<comment type="catalytic activity">
    <reaction evidence="11">
        <text>2'-deoxycytidine(in) = 2'-deoxycytidine(out)</text>
        <dbReference type="Rhea" id="RHEA:75695"/>
        <dbReference type="ChEBI" id="CHEBI:15698"/>
    </reaction>
</comment>
<comment type="catalytic activity">
    <reaction evidence="11">
        <text>guanine(out) = guanine(in)</text>
        <dbReference type="Rhea" id="RHEA:71531"/>
        <dbReference type="ChEBI" id="CHEBI:16235"/>
    </reaction>
</comment>
<comment type="catalytic activity">
    <reaction evidence="11">
        <text>uracil(in) = uracil(out)</text>
        <dbReference type="Rhea" id="RHEA:69404"/>
        <dbReference type="ChEBI" id="CHEBI:17568"/>
    </reaction>
</comment>
<comment type="catalytic activity">
    <reaction evidence="11">
        <text>(R)-noradrenaline(out) = (R)-noradrenaline(in)</text>
        <dbReference type="Rhea" id="RHEA:73871"/>
        <dbReference type="ChEBI" id="CHEBI:72587"/>
    </reaction>
</comment>
<comment type="catalytic activity">
    <reaction evidence="11">
        <text>dopamine(out) = dopamine(in)</text>
        <dbReference type="Rhea" id="RHEA:73863"/>
        <dbReference type="ChEBI" id="CHEBI:59905"/>
    </reaction>
</comment>
<comment type="catalytic activity">
    <reaction evidence="11">
        <text>serotonin(out) = serotonin(in)</text>
        <dbReference type="Rhea" id="RHEA:73867"/>
        <dbReference type="ChEBI" id="CHEBI:350546"/>
    </reaction>
</comment>
<comment type="catalytic activity">
    <reaction evidence="11">
        <text>tyramine(in) = tyramine(out)</text>
        <dbReference type="Rhea" id="RHEA:74783"/>
        <dbReference type="ChEBI" id="CHEBI:327995"/>
    </reaction>
</comment>
<comment type="catalytic activity">
    <reaction evidence="11">
        <text>ATP(in) = ATP(out)</text>
        <dbReference type="Rhea" id="RHEA:75687"/>
        <dbReference type="ChEBI" id="CHEBI:30616"/>
    </reaction>
</comment>
<comment type="biophysicochemical properties">
    <kinetics>
        <KM evidence="21">1619 uM for adenosine (at pH 5.5)</KM>
        <KM evidence="8">1860 uM for adenosine (at pH 5.5)</KM>
        <KM evidence="17">1800 uM for adenosine (at pH 5.5)</KM>
        <KM evidence="8">2020 uM for uridine (at pH 5.5)</KM>
    </kinetics>
    <phDependence>
        <text evidence="8 11 21">Optimum pH is 5.5 for adenosine transport (PubMed:15701636, PubMed:19164483, PubMed:28729424). No adenosine transport at pH 7.4 (PubMed:28729424).</text>
    </phDependence>
</comment>
<comment type="interaction">
    <interactant intactId="EBI-12701374">
        <id>Q9BZD2</id>
    </interactant>
    <interactant intactId="EBI-625022">
        <id>O43889-2</id>
        <label>CREB3</label>
    </interactant>
    <organismsDiffer>false</organismsDiffer>
    <experiments>3</experiments>
</comment>
<comment type="subcellular location">
    <subcellularLocation>
        <location evidence="8 9">Lysosome membrane</location>
        <topology evidence="26">Multi-pass membrane protein</topology>
    </subcellularLocation>
    <subcellularLocation>
        <location evidence="8">Late endosome membrane</location>
        <topology evidence="26">Multi-pass membrane protein</topology>
    </subcellularLocation>
    <subcellularLocation>
        <location evidence="11">Mitochondrion membrane</location>
        <topology evidence="26">Multi-pass membrane protein</topology>
    </subcellularLocation>
    <subcellularLocation>
        <location evidence="11">Cell membrane</location>
        <topology evidence="26">Multi-pass membrane protein</topology>
    </subcellularLocation>
    <text evidence="8 11">Observed in a punctate intracellular pattern showing partial colocalization with late endosomes/lysosomes (PubMed:15701636). Detected at the cell surface only in certain placental cells (PubMed:19164483).</text>
</comment>
<comment type="alternative products">
    <event type="alternative splicing"/>
    <isoform>
        <id>Q9BZD2-1</id>
        <name>1</name>
        <sequence type="displayed"/>
    </isoform>
    <isoform>
        <id>Q9BZD2-2</id>
        <name>2</name>
        <sequence type="described" ref="VSP_037436"/>
    </isoform>
</comment>
<comment type="tissue specificity">
    <text evidence="8 11 20">Widely expressed in both adult and fetal tissues (PubMed:15701636). Highest levels in placenta, uterus, ovary, spleen, lymph node and bone marrow (PubMed:15701636). Expressed in liver (PubMed:19164483). Lowest levels in brain and heart (PubMed:15701636). Expressed in macrophages (PubMed:22174130).</text>
</comment>
<comment type="domain">
    <text evidence="8">Contains a N-terminal dileucine motif (DE)XXXL(LI) important for endosomal/lysosomal and mitochondrial subcellular localization.</text>
</comment>
<comment type="disease" evidence="10 12 13 14 15 16 17 18 19">
    <disease id="DI-01692">
        <name>Histiocytosis-lymphadenopathy plus syndrome</name>
        <acronym>HLAS</acronym>
        <description>A syndrome characterized by the combination of features from 2 or more of four histiocytic disorders, originally thought to be distinct: Faisalabad histiocytosis (FHC), sinus histiocytosis with massive lymphadenopathy (SHML), H syndrome, and pigmented hypertrichosis with insulin-dependent diabetes mellitus syndrome (PHID). FHC features include joint deformities, sensorineural hearing loss, and subsequent development of generalized lymphadenopathy and swellings in the eyelids that contain histiocytes. SHML causes lymph node enlargement in children frequently accompanied by fever, leukocytosis, elevated erythrocyte sedimentation rate, and polyclonal hypergammaglobulinemia. H syndrome is characterized by cutaneous hyperpigmentation and hypertrichosis, hepatosplenomegaly, heart anomalies, and hypogonadism; hearing loss is found in about half of patients. PHID is characterized by predominantly antibody-negative insulin-dependent diabetes mellitus associated with pigmented hypertrichosis and variable occurrence of other features of H syndrome.</description>
        <dbReference type="MIM" id="602782"/>
    </disease>
    <text>The disease is caused by variants affecting the gene represented in this entry.</text>
</comment>
<comment type="miscellaneous">
    <text evidence="8 11 17 21">Transports nucleoside analog drugs such as cladribine, cordycepin, tubercidin and idovudine (PubMed:15701636, PubMed:19164483). Also involved in the uptake of diabetes treatment medicine metformin, neurotoxin 1-methyl-4-phenylpyridinium (MPP(+)), and ribavirin (PubMed:19164483). Transport activity is insensitive to nanomolar concentrations of the inhibitors nitrobenzylmercaptopurine riboside, dipyridamole and dilazep, and inhibited by higher concentrations (PubMed:15701636). Does not transport hypoxanthine (PubMed:15701636, PubMed:19164483). A truncated version of SLC29A3/hENT3 in which the N-terminal 36 amino acids are deleted, enables cell-surface localization of an otherwise intracellular transporter, and is utilized to investigate the transporter activity (PubMed:15701636, PubMed:19164483, PubMed:20595384, PubMed:28729424).</text>
</comment>
<comment type="similarity">
    <text evidence="26">Belongs to the SLC29A/ENT transporter (TC 2.A.57) family.</text>
</comment>
<comment type="sequence caution" evidence="26">
    <conflict type="erroneous initiation">
        <sequence resource="EMBL-CDS" id="BAA92041"/>
    </conflict>
    <text>Truncated N-terminus.</text>
</comment>
<organism>
    <name type="scientific">Homo sapiens</name>
    <name type="common">Human</name>
    <dbReference type="NCBI Taxonomy" id="9606"/>
    <lineage>
        <taxon>Eukaryota</taxon>
        <taxon>Metazoa</taxon>
        <taxon>Chordata</taxon>
        <taxon>Craniata</taxon>
        <taxon>Vertebrata</taxon>
        <taxon>Euteleostomi</taxon>
        <taxon>Mammalia</taxon>
        <taxon>Eutheria</taxon>
        <taxon>Euarchontoglires</taxon>
        <taxon>Primates</taxon>
        <taxon>Haplorrhini</taxon>
        <taxon>Catarrhini</taxon>
        <taxon>Hominidae</taxon>
        <taxon>Homo</taxon>
    </lineage>
</organism>
<name>S29A3_HUMAN</name>
<dbReference type="EMBL" id="AF326987">
    <property type="protein sequence ID" value="AAK00958.1"/>
    <property type="molecule type" value="mRNA"/>
</dbReference>
<dbReference type="EMBL" id="BK000392">
    <property type="protein sequence ID" value="DAA00364.1"/>
    <property type="molecule type" value="Genomic_DNA"/>
</dbReference>
<dbReference type="EMBL" id="AY288928">
    <property type="protein sequence ID" value="AAP41133.1"/>
    <property type="molecule type" value="mRNA"/>
</dbReference>
<dbReference type="EMBL" id="AY358686">
    <property type="protein sequence ID" value="AAQ89049.1"/>
    <property type="molecule type" value="mRNA"/>
</dbReference>
<dbReference type="EMBL" id="AK002022">
    <property type="protein sequence ID" value="BAA92041.1"/>
    <property type="status" value="ALT_INIT"/>
    <property type="molecule type" value="mRNA"/>
</dbReference>
<dbReference type="EMBL" id="AK314497">
    <property type="protein sequence ID" value="BAG37097.1"/>
    <property type="molecule type" value="mRNA"/>
</dbReference>
<dbReference type="EMBL" id="AK304503">
    <property type="protein sequence ID" value="BAG65311.1"/>
    <property type="molecule type" value="mRNA"/>
</dbReference>
<dbReference type="EMBL" id="AK316152">
    <property type="protein sequence ID" value="BAH14523.1"/>
    <property type="molecule type" value="mRNA"/>
</dbReference>
<dbReference type="EMBL" id="AL359183">
    <property type="status" value="NOT_ANNOTATED_CDS"/>
    <property type="molecule type" value="Genomic_DNA"/>
</dbReference>
<dbReference type="EMBL" id="AL359384">
    <property type="status" value="NOT_ANNOTATED_CDS"/>
    <property type="molecule type" value="Genomic_DNA"/>
</dbReference>
<dbReference type="EMBL" id="BC000223">
    <property type="protein sequence ID" value="AAH00223.1"/>
    <property type="molecule type" value="mRNA"/>
</dbReference>
<dbReference type="EMBL" id="BC041575">
    <property type="protein sequence ID" value="AAH41575.1"/>
    <property type="molecule type" value="mRNA"/>
</dbReference>
<dbReference type="EMBL" id="BC120996">
    <property type="protein sequence ID" value="AAI20997.1"/>
    <property type="molecule type" value="mRNA"/>
</dbReference>
<dbReference type="EMBL" id="BC120997">
    <property type="protein sequence ID" value="AAI20998.1"/>
    <property type="molecule type" value="mRNA"/>
</dbReference>
<dbReference type="CCDS" id="CCDS7310.1">
    <molecule id="Q9BZD2-1"/>
</dbReference>
<dbReference type="RefSeq" id="NP_001167569.1">
    <property type="nucleotide sequence ID" value="NM_001174098.1"/>
</dbReference>
<dbReference type="RefSeq" id="NP_060814.4">
    <molecule id="Q9BZD2-1"/>
    <property type="nucleotide sequence ID" value="NM_018344.5"/>
</dbReference>
<dbReference type="RefSeq" id="XP_016871866.1">
    <property type="nucleotide sequence ID" value="XM_017016377.1"/>
</dbReference>
<dbReference type="SMR" id="Q9BZD2"/>
<dbReference type="BioGRID" id="120597">
    <property type="interactions" value="5"/>
</dbReference>
<dbReference type="FunCoup" id="Q9BZD2">
    <property type="interactions" value="434"/>
</dbReference>
<dbReference type="IntAct" id="Q9BZD2">
    <property type="interactions" value="2"/>
</dbReference>
<dbReference type="STRING" id="9606.ENSP00000362285"/>
<dbReference type="DrugBank" id="DB00640">
    <property type="generic name" value="Adenosine"/>
</dbReference>
<dbReference type="TCDB" id="2.A.57.1.6">
    <property type="family name" value="the equilibrative nucleoside transporter (ent) family"/>
</dbReference>
<dbReference type="GlyCosmos" id="Q9BZD2">
    <property type="glycosylation" value="1 site, No reported glycans"/>
</dbReference>
<dbReference type="GlyGen" id="Q9BZD2">
    <property type="glycosylation" value="1 site"/>
</dbReference>
<dbReference type="iPTMnet" id="Q9BZD2"/>
<dbReference type="PhosphoSitePlus" id="Q9BZD2"/>
<dbReference type="SwissPalm" id="Q9BZD2"/>
<dbReference type="BioMuta" id="SLC29A3"/>
<dbReference type="DMDM" id="313104188"/>
<dbReference type="jPOST" id="Q9BZD2"/>
<dbReference type="MassIVE" id="Q9BZD2"/>
<dbReference type="PaxDb" id="9606-ENSP00000362285"/>
<dbReference type="PeptideAtlas" id="Q9BZD2"/>
<dbReference type="ProteomicsDB" id="79812">
    <molecule id="Q9BZD2-1"/>
</dbReference>
<dbReference type="ProteomicsDB" id="79813">
    <molecule id="Q9BZD2-2"/>
</dbReference>
<dbReference type="Antibodypedia" id="68472">
    <property type="antibodies" value="114 antibodies from 20 providers"/>
</dbReference>
<dbReference type="DNASU" id="55315"/>
<dbReference type="Ensembl" id="ENST00000373189.6">
    <molecule id="Q9BZD2-1"/>
    <property type="protein sequence ID" value="ENSP00000362285.5"/>
    <property type="gene ID" value="ENSG00000198246.10"/>
</dbReference>
<dbReference type="GeneID" id="55315"/>
<dbReference type="KEGG" id="hsa:55315"/>
<dbReference type="MANE-Select" id="ENST00000373189.6">
    <property type="protein sequence ID" value="ENSP00000362285.5"/>
    <property type="RefSeq nucleotide sequence ID" value="NM_018344.6"/>
    <property type="RefSeq protein sequence ID" value="NP_060814.4"/>
</dbReference>
<dbReference type="UCSC" id="uc001jrr.5">
    <molecule id="Q9BZD2-1"/>
    <property type="organism name" value="human"/>
</dbReference>
<dbReference type="AGR" id="HGNC:23096"/>
<dbReference type="CTD" id="55315"/>
<dbReference type="DisGeNET" id="55315"/>
<dbReference type="GeneCards" id="SLC29A3"/>
<dbReference type="HGNC" id="HGNC:23096">
    <property type="gene designation" value="SLC29A3"/>
</dbReference>
<dbReference type="HPA" id="ENSG00000198246">
    <property type="expression patterns" value="Low tissue specificity"/>
</dbReference>
<dbReference type="MalaCards" id="SLC29A3"/>
<dbReference type="MIM" id="602782">
    <property type="type" value="phenotype"/>
</dbReference>
<dbReference type="MIM" id="612373">
    <property type="type" value="gene"/>
</dbReference>
<dbReference type="neXtProt" id="NX_Q9BZD2"/>
<dbReference type="OpenTargets" id="ENSG00000198246"/>
<dbReference type="Orphanet" id="1782">
    <property type="disease" value="Dysosteosclerosis"/>
</dbReference>
<dbReference type="Orphanet" id="168569">
    <property type="disease" value="H syndrome"/>
</dbReference>
<dbReference type="PharmGKB" id="PA134950750"/>
<dbReference type="VEuPathDB" id="HostDB:ENSG00000198246"/>
<dbReference type="eggNOG" id="KOG1479">
    <property type="taxonomic scope" value="Eukaryota"/>
</dbReference>
<dbReference type="GeneTree" id="ENSGT00950000182898"/>
<dbReference type="HOGENOM" id="CLU_021611_6_1_1"/>
<dbReference type="InParanoid" id="Q9BZD2"/>
<dbReference type="OMA" id="GSPWTTK"/>
<dbReference type="OrthoDB" id="46396at2759"/>
<dbReference type="PAN-GO" id="Q9BZD2">
    <property type="GO annotations" value="3 GO annotations based on evolutionary models"/>
</dbReference>
<dbReference type="PhylomeDB" id="Q9BZD2"/>
<dbReference type="TreeFam" id="TF313950"/>
<dbReference type="PathwayCommons" id="Q9BZD2"/>
<dbReference type="Reactome" id="R-HSA-5619063">
    <property type="pathway name" value="Defective SLC29A3 causes histiocytosis-lymphadenopathy plus syndrome (HLAS)"/>
</dbReference>
<dbReference type="Reactome" id="R-HSA-83936">
    <property type="pathway name" value="Transport of nucleosides and free purine and pyrimidine bases across the plasma membrane"/>
</dbReference>
<dbReference type="Reactome" id="R-HSA-9755088">
    <property type="pathway name" value="Ribavirin ADME"/>
</dbReference>
<dbReference type="SignaLink" id="Q9BZD2"/>
<dbReference type="BioGRID-ORCS" id="55315">
    <property type="hits" value="19 hits in 1151 CRISPR screens"/>
</dbReference>
<dbReference type="ChiTaRS" id="SLC29A3">
    <property type="organism name" value="human"/>
</dbReference>
<dbReference type="GenomeRNAi" id="55315"/>
<dbReference type="Pharos" id="Q9BZD2">
    <property type="development level" value="Tbio"/>
</dbReference>
<dbReference type="PRO" id="PR:Q9BZD2"/>
<dbReference type="Proteomes" id="UP000005640">
    <property type="component" value="Chromosome 10"/>
</dbReference>
<dbReference type="RNAct" id="Q9BZD2">
    <property type="molecule type" value="protein"/>
</dbReference>
<dbReference type="Bgee" id="ENSG00000198246">
    <property type="expression patterns" value="Expressed in primordial germ cell in gonad and 162 other cell types or tissues"/>
</dbReference>
<dbReference type="ExpressionAtlas" id="Q9BZD2">
    <property type="expression patterns" value="baseline and differential"/>
</dbReference>
<dbReference type="GO" id="GO:0005794">
    <property type="term" value="C:Golgi apparatus"/>
    <property type="evidence" value="ECO:0000314"/>
    <property type="project" value="HPA"/>
</dbReference>
<dbReference type="GO" id="GO:0043231">
    <property type="term" value="C:intracellular membrane-bounded organelle"/>
    <property type="evidence" value="ECO:0000314"/>
    <property type="project" value="HPA"/>
</dbReference>
<dbReference type="GO" id="GO:0031902">
    <property type="term" value="C:late endosome membrane"/>
    <property type="evidence" value="ECO:0000314"/>
    <property type="project" value="UniProtKB"/>
</dbReference>
<dbReference type="GO" id="GO:0005765">
    <property type="term" value="C:lysosomal membrane"/>
    <property type="evidence" value="ECO:0000314"/>
    <property type="project" value="UniProtKB"/>
</dbReference>
<dbReference type="GO" id="GO:0005741">
    <property type="term" value="C:mitochondrial outer membrane"/>
    <property type="evidence" value="ECO:0000304"/>
    <property type="project" value="Reactome"/>
</dbReference>
<dbReference type="GO" id="GO:0005886">
    <property type="term" value="C:plasma membrane"/>
    <property type="evidence" value="ECO:0000318"/>
    <property type="project" value="GO_Central"/>
</dbReference>
<dbReference type="GO" id="GO:0015212">
    <property type="term" value="F:cytidine transmembrane transporter activity"/>
    <property type="evidence" value="ECO:0000314"/>
    <property type="project" value="UniProtKB"/>
</dbReference>
<dbReference type="GO" id="GO:0015208">
    <property type="term" value="F:guanine transmembrane transporter activity"/>
    <property type="evidence" value="ECO:0000314"/>
    <property type="project" value="UniProtKB"/>
</dbReference>
<dbReference type="GO" id="GO:0008504">
    <property type="term" value="F:monoamine transmembrane transporter activity"/>
    <property type="evidence" value="ECO:0000314"/>
    <property type="project" value="UniProtKB"/>
</dbReference>
<dbReference type="GO" id="GO:0005326">
    <property type="term" value="F:neurotransmitter transmembrane transporter activity"/>
    <property type="evidence" value="ECO:0000314"/>
    <property type="project" value="UniProtKB"/>
</dbReference>
<dbReference type="GO" id="GO:0015205">
    <property type="term" value="F:nucleobase transmembrane transporter activity"/>
    <property type="evidence" value="ECO:0000314"/>
    <property type="project" value="UniProtKB"/>
</dbReference>
<dbReference type="GO" id="GO:0005337">
    <property type="term" value="F:nucleoside transmembrane transporter activity"/>
    <property type="evidence" value="ECO:0000314"/>
    <property type="project" value="UniProtKB"/>
</dbReference>
<dbReference type="GO" id="GO:0015101">
    <property type="term" value="F:organic cation transmembrane transporter activity"/>
    <property type="evidence" value="ECO:0000314"/>
    <property type="project" value="UniProtKB"/>
</dbReference>
<dbReference type="GO" id="GO:0015210">
    <property type="term" value="F:uracil transmembrane transporter activity"/>
    <property type="evidence" value="ECO:0000314"/>
    <property type="project" value="UniProtKB"/>
</dbReference>
<dbReference type="GO" id="GO:0015213">
    <property type="term" value="F:uridine transmembrane transporter activity"/>
    <property type="evidence" value="ECO:0000314"/>
    <property type="project" value="UniProtKB"/>
</dbReference>
<dbReference type="GO" id="GO:0032238">
    <property type="term" value="P:adenosine transport"/>
    <property type="evidence" value="ECO:0000314"/>
    <property type="project" value="UniProtKB"/>
</dbReference>
<dbReference type="GO" id="GO:0015861">
    <property type="term" value="P:cytidine transport"/>
    <property type="evidence" value="ECO:0000314"/>
    <property type="project" value="UniProtKB"/>
</dbReference>
<dbReference type="GO" id="GO:0015872">
    <property type="term" value="P:dopamine transport"/>
    <property type="evidence" value="ECO:0000314"/>
    <property type="project" value="UniProtKB"/>
</dbReference>
<dbReference type="GO" id="GO:1903716">
    <property type="term" value="P:guanine transmembrane transport"/>
    <property type="evidence" value="ECO:0000314"/>
    <property type="project" value="UniProtKB"/>
</dbReference>
<dbReference type="GO" id="GO:0035340">
    <property type="term" value="P:inosine transport"/>
    <property type="evidence" value="ECO:0000314"/>
    <property type="project" value="UniProtKB"/>
</dbReference>
<dbReference type="GO" id="GO:0015874">
    <property type="term" value="P:norepinephrine transport"/>
    <property type="evidence" value="ECO:0000314"/>
    <property type="project" value="UniProtKB"/>
</dbReference>
<dbReference type="GO" id="GO:0015851">
    <property type="term" value="P:nucleobase transport"/>
    <property type="evidence" value="ECO:0000314"/>
    <property type="project" value="UniProtKB"/>
</dbReference>
<dbReference type="GO" id="GO:1901642">
    <property type="term" value="P:nucleoside transmembrane transport"/>
    <property type="evidence" value="ECO:0000314"/>
    <property type="project" value="UniProtKB"/>
</dbReference>
<dbReference type="GO" id="GO:0015858">
    <property type="term" value="P:nucleoside transport"/>
    <property type="evidence" value="ECO:0000314"/>
    <property type="project" value="UniProtKB"/>
</dbReference>
<dbReference type="GO" id="GO:1904823">
    <property type="term" value="P:purine nucleobase transmembrane transport"/>
    <property type="evidence" value="ECO:0000314"/>
    <property type="project" value="UniProtKB"/>
</dbReference>
<dbReference type="GO" id="GO:1904082">
    <property type="term" value="P:pyrimidine nucleobase transmembrane transport"/>
    <property type="evidence" value="ECO:0000314"/>
    <property type="project" value="UniProtKB"/>
</dbReference>
<dbReference type="GO" id="GO:0006837">
    <property type="term" value="P:serotonin transport"/>
    <property type="evidence" value="ECO:0000314"/>
    <property type="project" value="UniProtKB"/>
</dbReference>
<dbReference type="GO" id="GO:1903791">
    <property type="term" value="P:uracil transmembrane transport"/>
    <property type="evidence" value="ECO:0000314"/>
    <property type="project" value="UniProtKB"/>
</dbReference>
<dbReference type="GO" id="GO:0015862">
    <property type="term" value="P:uridine transmembrane transport"/>
    <property type="evidence" value="ECO:0000314"/>
    <property type="project" value="UniProtKB"/>
</dbReference>
<dbReference type="GO" id="GO:0006805">
    <property type="term" value="P:xenobiotic metabolic process"/>
    <property type="evidence" value="ECO:0000304"/>
    <property type="project" value="Reactome"/>
</dbReference>
<dbReference type="InterPro" id="IPR002259">
    <property type="entry name" value="Eqnu_transpt"/>
</dbReference>
<dbReference type="PANTHER" id="PTHR10332">
    <property type="entry name" value="EQUILIBRATIVE NUCLEOSIDE TRANSPORTER"/>
    <property type="match status" value="1"/>
</dbReference>
<dbReference type="PANTHER" id="PTHR10332:SF17">
    <property type="entry name" value="EQUILIBRATIVE NUCLEOSIDE TRANSPORTER 3"/>
    <property type="match status" value="1"/>
</dbReference>
<dbReference type="Pfam" id="PF01733">
    <property type="entry name" value="Nucleoside_tran"/>
    <property type="match status" value="1"/>
</dbReference>
<dbReference type="PIRSF" id="PIRSF016379">
    <property type="entry name" value="ENT"/>
    <property type="match status" value="1"/>
</dbReference>
<dbReference type="PRINTS" id="PR01130">
    <property type="entry name" value="DERENTRNSPRT"/>
</dbReference>
<sequence length="475" mass="51815">MAVVSEDDFQHSSNSTYRTTSSSLRADQEALLEKLLDRPPPGLQRPEDRFCGTYIIFFSLGIGSLLPWNFFITAKEYWMFKLRNSSSPATGEDPEGSDILNYFESYLAVASTVPSMLCLVANFLLVNRVAVHIRVLASLTVILAIFMVITALVKVDTSSWTRGFFAVTIVCMVILSGASTVFSSSIYGMTGSFPMRNSQALISGGAMGGTVSAVASLVDLAASSDVRNSALAFFLTATVFLVLCMGLYLLLSRLEYARYYMRPVLAAHVFSGEEELPQDSLSAPSVASRFIDSHTPPLRPILKKTASLGFCVTYVFFITSLIYPAICTNIESLNKGSGSLWTTKFFIPLTTFLLYNFADLCGRQLTAWIQVPGPNSKALPGFVLLRTCLIPLFVLCNYQPRVHLKTVVFQSDVYPALLSSLLGLSNGYLSTLALLYGPKIVPRELAEATGVVMSFYVCLGLTLGSACSTLLVHLI</sequence>
<gene>
    <name evidence="27" type="primary">SLC29A3</name>
    <name type="synonym">ENT3</name>
    <name type="ORF">UNQ717/PRO1380</name>
</gene>
<accession>Q9BZD2</accession>
<accession>B2RB50</accession>
<accession>B4E2Z9</accession>
<accession>B7ZA37</accession>
<accession>Q0VAM9</accession>
<accession>Q5T465</accession>
<accession>Q7RTT8</accession>
<accession>Q8IVZ0</accession>
<accession>Q9BWI2</accession>
<accession>Q9NUS9</accession>
<keyword id="KW-0025">Alternative splicing</keyword>
<keyword id="KW-1003">Cell membrane</keyword>
<keyword id="KW-0225">Disease variant</keyword>
<keyword id="KW-0967">Endosome</keyword>
<keyword id="KW-0325">Glycoprotein</keyword>
<keyword id="KW-0458">Lysosome</keyword>
<keyword id="KW-0472">Membrane</keyword>
<keyword id="KW-0496">Mitochondrion</keyword>
<keyword id="KW-0597">Phosphoprotein</keyword>
<keyword id="KW-1267">Proteomics identification</keyword>
<keyword id="KW-1185">Reference proteome</keyword>
<keyword id="KW-0812">Transmembrane</keyword>
<keyword id="KW-1133">Transmembrane helix</keyword>
<keyword id="KW-0813">Transport</keyword>
<protein>
    <recommendedName>
        <fullName evidence="24">Equilibrative nucleoside transporter 3</fullName>
        <shortName evidence="24">hENT3</shortName>
    </recommendedName>
    <alternativeName>
        <fullName evidence="25">Solute carrier family 29 member 3</fullName>
    </alternativeName>
</protein>
<evidence type="ECO:0000250" key="1">
    <source>
        <dbReference type="UniProtKB" id="Q99P65"/>
    </source>
</evidence>
<evidence type="ECO:0000255" key="2"/>
<evidence type="ECO:0000256" key="3">
    <source>
        <dbReference type="SAM" id="MobiDB-lite"/>
    </source>
</evidence>
<evidence type="ECO:0000269" key="4">
    <source>
    </source>
</evidence>
<evidence type="ECO:0000269" key="5">
    <source>
    </source>
</evidence>
<evidence type="ECO:0000269" key="6">
    <source>
    </source>
</evidence>
<evidence type="ECO:0000269" key="7">
    <source>
    </source>
</evidence>
<evidence type="ECO:0000269" key="8">
    <source>
    </source>
</evidence>
<evidence type="ECO:0000269" key="9">
    <source>
    </source>
</evidence>
<evidence type="ECO:0000269" key="10">
    <source>
    </source>
</evidence>
<evidence type="ECO:0000269" key="11">
    <source>
    </source>
</evidence>
<evidence type="ECO:0000269" key="12">
    <source>
    </source>
</evidence>
<evidence type="ECO:0000269" key="13">
    <source>
    </source>
</evidence>
<evidence type="ECO:0000269" key="14">
    <source>
    </source>
</evidence>
<evidence type="ECO:0000269" key="15">
    <source>
    </source>
</evidence>
<evidence type="ECO:0000269" key="16">
    <source>
    </source>
</evidence>
<evidence type="ECO:0000269" key="17">
    <source>
    </source>
</evidence>
<evidence type="ECO:0000269" key="18">
    <source>
    </source>
</evidence>
<evidence type="ECO:0000269" key="19">
    <source>
    </source>
</evidence>
<evidence type="ECO:0000269" key="20">
    <source>
    </source>
</evidence>
<evidence type="ECO:0000269" key="21">
    <source>
    </source>
</evidence>
<evidence type="ECO:0000269" key="22">
    <source ref="3"/>
</evidence>
<evidence type="ECO:0000303" key="23">
    <source>
    </source>
</evidence>
<evidence type="ECO:0000303" key="24">
    <source>
    </source>
</evidence>
<evidence type="ECO:0000303" key="25">
    <source>
    </source>
</evidence>
<evidence type="ECO:0000305" key="26"/>
<evidence type="ECO:0000312" key="27">
    <source>
        <dbReference type="HGNC" id="HGNC:23096"/>
    </source>
</evidence>
<evidence type="ECO:0007744" key="28">
    <source>
    </source>
</evidence>
<feature type="chain" id="PRO_0000209343" description="Equilibrative nucleoside transporter 3">
    <location>
        <begin position="1"/>
        <end position="475"/>
    </location>
</feature>
<feature type="topological domain" description="Cytoplasmic" evidence="2">
    <location>
        <begin position="1"/>
        <end position="53"/>
    </location>
</feature>
<feature type="transmembrane region" description="Helical" evidence="2">
    <location>
        <begin position="54"/>
        <end position="74"/>
    </location>
</feature>
<feature type="topological domain" description="Extracellular" evidence="2">
    <location>
        <begin position="75"/>
        <end position="105"/>
    </location>
</feature>
<feature type="transmembrane region" description="Helical" evidence="2">
    <location>
        <begin position="106"/>
        <end position="126"/>
    </location>
</feature>
<feature type="topological domain" description="Cytoplasmic" evidence="2">
    <location>
        <begin position="127"/>
        <end position="134"/>
    </location>
</feature>
<feature type="transmembrane region" description="Helical" evidence="2">
    <location>
        <begin position="135"/>
        <end position="155"/>
    </location>
</feature>
<feature type="topological domain" description="Extracellular" evidence="2">
    <location>
        <begin position="156"/>
        <end position="162"/>
    </location>
</feature>
<feature type="transmembrane region" description="Helical" evidence="2">
    <location>
        <begin position="163"/>
        <end position="183"/>
    </location>
</feature>
<feature type="topological domain" description="Cytoplasmic" evidence="2">
    <location>
        <begin position="184"/>
        <end position="199"/>
    </location>
</feature>
<feature type="transmembrane region" description="Helical" evidence="2">
    <location>
        <begin position="200"/>
        <end position="220"/>
    </location>
</feature>
<feature type="topological domain" description="Extracellular" evidence="2">
    <location>
        <begin position="221"/>
        <end position="230"/>
    </location>
</feature>
<feature type="transmembrane region" description="Helical" evidence="2">
    <location>
        <begin position="231"/>
        <end position="251"/>
    </location>
</feature>
<feature type="topological domain" description="Cytoplasmic" evidence="2">
    <location>
        <begin position="252"/>
        <end position="305"/>
    </location>
</feature>
<feature type="transmembrane region" description="Helical" evidence="2">
    <location>
        <begin position="306"/>
        <end position="326"/>
    </location>
</feature>
<feature type="topological domain" description="Extracellular" evidence="2">
    <location>
        <begin position="327"/>
        <end position="337"/>
    </location>
</feature>
<feature type="transmembrane region" description="Helical" evidence="2">
    <location>
        <begin position="338"/>
        <end position="358"/>
    </location>
</feature>
<feature type="topological domain" description="Cytoplasmic" evidence="2">
    <location>
        <begin position="359"/>
        <end position="377"/>
    </location>
</feature>
<feature type="transmembrane region" description="Helical" evidence="2">
    <location>
        <begin position="378"/>
        <end position="398"/>
    </location>
</feature>
<feature type="topological domain" description="Extracellular" evidence="2">
    <location>
        <begin position="399"/>
        <end position="415"/>
    </location>
</feature>
<feature type="transmembrane region" description="Helical" evidence="2">
    <location>
        <begin position="416"/>
        <end position="436"/>
    </location>
</feature>
<feature type="topological domain" description="Cytoplasmic" evidence="2">
    <location>
        <begin position="437"/>
        <end position="454"/>
    </location>
</feature>
<feature type="transmembrane region" description="Helical" evidence="2">
    <location>
        <begin position="455"/>
        <end position="475"/>
    </location>
</feature>
<feature type="region of interest" description="Disordered" evidence="3">
    <location>
        <begin position="1"/>
        <end position="24"/>
    </location>
</feature>
<feature type="short sequence motif" description="Dileucine internalization motif" evidence="8">
    <location>
        <begin position="31"/>
        <end position="32"/>
    </location>
</feature>
<feature type="compositionally biased region" description="Low complexity" evidence="3">
    <location>
        <begin position="12"/>
        <end position="23"/>
    </location>
</feature>
<feature type="site" description="Important for acidic pH-dependent nucleoside transporter activity. Acts as a pH sensor" evidence="21">
    <location>
        <position position="219"/>
    </location>
</feature>
<feature type="site" description="Important for acidic pH-dependent nucleoside transporter activity. Acts as a pH sensor" evidence="21">
    <location>
        <position position="447"/>
    </location>
</feature>
<feature type="modified residue" description="Phosphoserine" evidence="1">
    <location>
        <position position="21"/>
    </location>
</feature>
<feature type="modified residue" description="Phosphoserine" evidence="28">
    <location>
        <position position="23"/>
    </location>
</feature>
<feature type="glycosylation site" description="N-linked (GlcNAc...) asparagine" evidence="2">
    <location>
        <position position="84"/>
    </location>
</feature>
<feature type="splice variant" id="VSP_037436" description="In isoform 2." evidence="23">
    <location>
        <begin position="1"/>
        <end position="146"/>
    </location>
</feature>
<feature type="sequence variant" id="VAR_018662" description="In dbSNP:rs2277257." evidence="5">
    <original>R</original>
    <variation>G</variation>
    <location>
        <position position="18"/>
    </location>
</feature>
<feature type="sequence variant" id="VAR_067801" description="In HLAS; partially retained in the endoplasmic reticulum; results in reduced nucleoside transport; dbSNP:rs267607057." evidence="12 17">
    <original>M</original>
    <variation>R</variation>
    <location>
        <position position="116"/>
    </location>
</feature>
<feature type="sequence variant" id="VAR_067802" description="In HLAS; dbSNP:rs1430557607." evidence="15">
    <original>R</original>
    <variation>C</variation>
    <location>
        <position position="134"/>
    </location>
</feature>
<feature type="sequence variant" id="VAR_018663" description="In dbSNP:rs780668." evidence="4 6 7 22">
    <original>S</original>
    <variation>F</variation>
    <location>
        <position position="158"/>
    </location>
</feature>
<feature type="sequence variant" id="VAR_067803" description="In dbSNP:rs143557881." evidence="14">
    <original>G</original>
    <variation>V</variation>
    <location>
        <position position="163"/>
    </location>
</feature>
<feature type="sequence variant" id="VAR_067804" description="In HLAS; dbSNP:rs1023257012." evidence="16">
    <original>S</original>
    <variation>R</variation>
    <location>
        <position position="184"/>
    </location>
</feature>
<feature type="sequence variant" id="VAR_018664" description="In dbSNP:rs2252996." evidence="4 5 6 7 22">
    <original>V</original>
    <variation>I</variation>
    <location>
        <position position="239"/>
    </location>
</feature>
<feature type="sequence variant" id="VAR_067805" description="In dbSNP:rs79737301." evidence="14">
    <original>L</original>
    <variation>P</variation>
    <location>
        <position position="281"/>
    </location>
</feature>
<feature type="sequence variant" id="VAR_018665" description="In dbSNP:rs2487068." evidence="4 5 6 7 22">
    <original>I</original>
    <variation>V</variation>
    <location>
        <position position="326"/>
    </location>
</feature>
<feature type="sequence variant" id="VAR_067806" description="In HLAS; dbSNP:rs387907066." evidence="13 19">
    <original>R</original>
    <variation>Q</variation>
    <location>
        <position position="363"/>
    </location>
</feature>
<feature type="sequence variant" id="VAR_067807" description="In HLAS; dbSNP:rs387907067." evidence="13">
    <original>R</original>
    <variation>W</variation>
    <location>
        <position position="363"/>
    </location>
</feature>
<feature type="sequence variant" id="VAR_067808" description="In dbSNP:rs144517514." evidence="14">
    <original>V</original>
    <variation>M</variation>
    <location>
        <position position="407"/>
    </location>
</feature>
<feature type="sequence variant" id="VAR_057884" description="In HLAS; almost total loss of nucleoside transport; dbSNP:rs121912583." evidence="10 17 18">
    <original>G</original>
    <variation>S</variation>
    <location>
        <position position="427"/>
    </location>
</feature>
<feature type="sequence variant" id="VAR_057885" description="In HLAS; results in reduced nucleoside transport; dbSNP:rs121912584." evidence="10 12 14 15 16 17 18">
    <original>G</original>
    <variation>R</variation>
    <location>
        <position position="437"/>
    </location>
</feature>
<feature type="sequence variant" id="VAR_067809" description="In HLAS; results in reduced nucleoside transport; dbSNP:rs267607058." evidence="12 17">
    <original>T</original>
    <variation>R</variation>
    <location>
        <position position="449"/>
    </location>
</feature>
<feature type="sequence variant" id="VAR_018666" description="In dbSNP:rs999940.">
    <original>V</original>
    <variation>E</variation>
    <location>
        <position position="452"/>
    </location>
</feature>
<feature type="mutagenesis site" description="Localization at the cell surface; when associated with A-32." evidence="8">
    <original>L</original>
    <variation>A</variation>
    <location>
        <position position="31"/>
    </location>
</feature>
<feature type="mutagenesis site" description="Localization at the cell surface; when associated with A-31." evidence="8">
    <original>L</original>
    <variation>A</variation>
    <location>
        <position position="32"/>
    </location>
</feature>
<feature type="mutagenesis site" description="No change in adenosine transport." evidence="21">
    <original>D</original>
    <variation>A</variation>
    <location>
        <position position="48"/>
    </location>
</feature>
<feature type="mutagenesis site" description="No change in adenosine transport." evidence="21">
    <original>Y</original>
    <variation>A</variation>
    <location>
        <position position="54"/>
    </location>
</feature>
<feature type="mutagenesis site" description="Decreased adenosine transport at pH 5.5." evidence="21">
    <original>E</original>
    <variation>A</variation>
    <location>
        <position position="76"/>
    </location>
</feature>
<feature type="mutagenesis site" description="Decreased adenosine transport at pH 5.5." evidence="21">
    <original>S</original>
    <variation>A</variation>
    <location>
        <position position="86"/>
    </location>
</feature>
<feature type="mutagenesis site" description="Decreased adenosine transport at pH 5.5." evidence="21">
    <original>E</original>
    <variation>A</variation>
    <location>
        <position position="92"/>
    </location>
</feature>
<feature type="mutagenesis site" description="No change in adenosine transport." evidence="21">
    <original>D</original>
    <variation>A</variation>
    <location>
        <position position="93"/>
    </location>
</feature>
<feature type="mutagenesis site" description="Partial loss of acidic pH-dependent activity resulting in moderate emergence of adenosine transport at pH 7.4. Partial loss of acidic pH-dependent activity resulting in moderate emergence of adenosine transport at pH 7.4; when associated with D-219." evidence="21">
    <original>E</original>
    <variation>A</variation>
    <location>
        <position position="95"/>
    </location>
</feature>
<feature type="mutagenesis site" description="Decreased adenosine transport at pH 5.5." evidence="21">
    <original>D</original>
    <variation>A</variation>
    <location>
        <position position="98"/>
    </location>
</feature>
<feature type="mutagenesis site" description="Decreased adenosine transport at pH 5.5." evidence="21">
    <original>E</original>
    <variation>A</variation>
    <location>
        <position position="104"/>
    </location>
</feature>
<feature type="mutagenesis site" description="Decreased adenosine transport at pH5.5." evidence="21">
    <original>H</original>
    <variation>A</variation>
    <variation>D</variation>
    <location>
        <position position="132"/>
    </location>
</feature>
<feature type="mutagenesis site" description="No change in adenosine transport at pH5.5." evidence="21">
    <original>H</original>
    <variation>P</variation>
    <variation>R</variation>
    <location>
        <position position="132"/>
    </location>
</feature>
<feature type="mutagenesis site" description="Decreased adenosine transport at pH5.5." evidence="21">
    <original>D</original>
    <variation>A</variation>
    <location>
        <position position="156"/>
    </location>
</feature>
<feature type="mutagenesis site" description="Decreased adenosine transport at pH 5.5." evidence="21">
    <original>W</original>
    <variation>A</variation>
    <location>
        <position position="160"/>
    </location>
</feature>
<feature type="mutagenesis site" description="Decreased adenosine transport at pH 5.5." evidence="21">
    <original>T</original>
    <variation>A</variation>
    <location>
        <position position="180"/>
    </location>
</feature>
<feature type="mutagenesis site" description="No change in adenosine transport." evidence="21">
    <original>S</original>
    <variation>A</variation>
    <location>
        <position position="184"/>
    </location>
</feature>
<feature type="mutagenesis site" description="Decreased adenosine transport at pH 5.5." evidence="21">
    <original>Y</original>
    <variation>A</variation>
    <location>
        <position position="187"/>
    </location>
</feature>
<feature type="mutagenesis site" description="No change in adenosine transport." evidence="21">
    <original>T</original>
    <variation>A</variation>
    <location>
        <position position="190"/>
    </location>
</feature>
<feature type="mutagenesis site" description="Decreased adenosine transport at pH 5.5. Partial loss of acidic pH-dependent activity resulting in emergence of adenosine transport at pH 7.4. Decreased nucleoside transport at pH 5.5; when associated with A-447. Complete loss of acidic pH-dependent activity resulting in full nucleoside transport at pH 7.4 as observed at pH 5.5; when associated with A-447." evidence="21">
    <original>D</original>
    <variation>A</variation>
    <location>
        <position position="219"/>
    </location>
</feature>
<feature type="mutagenesis site" description="Decreased adenosine transport at pH5.5." evidence="21">
    <original>D</original>
    <variation>A</variation>
    <location>
        <position position="225"/>
    </location>
</feature>
<feature type="mutagenesis site" description="Decreased adenosine transport at pH 5.5." evidence="21">
    <original>F</original>
    <variation>A</variation>
    <location>
        <position position="233"/>
    </location>
</feature>
<feature type="mutagenesis site" description="Decreased adenosine transport at pH 5.5." evidence="21">
    <original>C</original>
    <variation>A</variation>
    <location>
        <position position="244"/>
    </location>
</feature>
<feature type="mutagenesis site" description="No change in adenosine transport." evidence="21">
    <original>E</original>
    <variation>A</variation>
    <location>
        <position position="255"/>
    </location>
</feature>
<feature type="mutagenesis site" description="Decreased adenosine transport at pH 5.5." evidence="21">
    <original>H</original>
    <variation>A</variation>
    <variation>D</variation>
    <variation>R</variation>
    <location>
        <position position="268"/>
    </location>
</feature>
<feature type="mutagenesis site" description="No change in adenosine transport at pH 5.5." evidence="21">
    <original>H</original>
    <variation>P</variation>
    <location>
        <position position="268"/>
    </location>
</feature>
<feature type="mutagenesis site" description="No change in adenosine transport." evidence="21">
    <original>E</original>
    <variation>A</variation>
    <location>
        <position position="273"/>
    </location>
</feature>
<feature type="mutagenesis site" description="No change in adenosine transport." evidence="21">
    <original>E</original>
    <variation>A</variation>
    <location>
        <position position="274"/>
    </location>
</feature>
<feature type="mutagenesis site" description="Decreased adenosine transport at pH 5.5." evidence="21">
    <original>E</original>
    <variation>A</variation>
    <location>
        <position position="275"/>
    </location>
</feature>
<feature type="mutagenesis site" description="Decreased adenosine transport at pH 5.5." evidence="21">
    <original>D</original>
    <variation>A</variation>
    <location>
        <position position="279"/>
    </location>
</feature>
<feature type="mutagenesis site" description="Decreased adenosine transport at pH 5.5." evidence="21">
    <original>D</original>
    <variation>A</variation>
    <location>
        <position position="292"/>
    </location>
</feature>
<feature type="mutagenesis site" description="No change in adenosine transport." evidence="21">
    <original>H</original>
    <variation>A</variation>
    <variation>P</variation>
    <variation>D</variation>
    <variation>R</variation>
    <location>
        <position position="294"/>
    </location>
</feature>
<feature type="mutagenesis site" description="Decreased adenosine transport at pH 5.5." evidence="21">
    <original>F</original>
    <variation>A</variation>
    <location>
        <position position="317"/>
    </location>
</feature>
<feature type="mutagenesis site" description="Decreased adenosine transport at pH 5.5." evidence="21">
    <original>E</original>
    <variation>A</variation>
    <location>
        <position position="331"/>
    </location>
</feature>
<feature type="mutagenesis site" description="Decreased adenosine transport at pH 5.5." evidence="21">
    <original>D</original>
    <variation>A</variation>
    <location>
        <position position="359"/>
    </location>
</feature>
<feature type="mutagenesis site" description="Decreased adenosine transport at pH 5.5." evidence="21">
    <original>Y</original>
    <variation>A</variation>
    <location>
        <position position="398"/>
    </location>
</feature>
<feature type="mutagenesis site" description="Decreased adenosine transport at pH 5.5." evidence="21">
    <original>H</original>
    <variation>A</variation>
    <location>
        <position position="403"/>
    </location>
</feature>
<feature type="mutagenesis site" description="Loss of adenosine transport at pH 5.5." evidence="21">
    <original>H</original>
    <variation>P</variation>
    <variation>D</variation>
    <variation>R</variation>
    <location>
        <position position="403"/>
    </location>
</feature>
<feature type="mutagenesis site" description="Decreased adenosine transport at pH 5.5." evidence="21">
    <original>D</original>
    <variation>A</variation>
    <location>
        <position position="412"/>
    </location>
</feature>
<feature type="mutagenesis site" description="Decreased adenosine transport at pH 5.5." evidence="21">
    <original>S</original>
    <variation>A</variation>
    <location>
        <position position="419"/>
    </location>
</feature>
<feature type="mutagenesis site" description="Results in impaired nucleoside transport." evidence="17">
    <original>G</original>
    <variation>A</variation>
    <variation>F</variation>
    <variation>Y</variation>
    <variation>T</variation>
    <location>
        <position position="427"/>
    </location>
</feature>
<feature type="mutagenesis site" description="Decreased adenosine transport at pH 5.5." evidence="21">
    <original>E</original>
    <variation>A</variation>
    <location>
        <position position="444"/>
    </location>
</feature>
<feature type="mutagenesis site" description="Decreased adenosine transport at pH 5.5. Partial loss of acidic pH-dependent activity resulting in emergence of adenosine transport at pH 7.4. Decreased nucleoside transport at pH 5.5; when associated with A-219. Complete loss of acidic pH-dependent activity resulting in full nucleoside transport at pH 7.4 as observed at pH 5.5; when associated with A-219." evidence="21">
    <original>E</original>
    <variation>A</variation>
    <location>
        <position position="447"/>
    </location>
</feature>
<feature type="mutagenesis site" description="Decreased adenosine transport at pH 5.5." evidence="21">
    <original>T</original>
    <variation>A</variation>
    <location>
        <position position="469"/>
    </location>
</feature>
<feature type="mutagenesis site" description="Loss of adenosine transport at pH 5.5." evidence="21">
    <original>H</original>
    <variation>A</variation>
    <variation>P</variation>
    <variation>D</variation>
    <location>
        <position position="473"/>
    </location>
</feature>
<feature type="mutagenesis site" description="No change in adenosine transport at pH 5.5." evidence="21">
    <original>H</original>
    <variation>R</variation>
    <location>
        <position position="473"/>
    </location>
</feature>
<feature type="sequence conflict" description="In Ref. 5; BAG37097." evidence="26" ref="5">
    <original>L</original>
    <variation>P</variation>
    <location>
        <position position="32"/>
    </location>
</feature>
<feature type="sequence conflict" description="In Ref. 5; BAA92041." evidence="26" ref="5">
    <original>T</original>
    <variation>A</variation>
    <location>
        <position position="112"/>
    </location>
</feature>
<feature type="sequence conflict" description="In Ref. 5; BAG65311." evidence="26" ref="5">
    <original>A</original>
    <variation>S</variation>
    <location>
        <position position="306"/>
    </location>
</feature>
<feature type="sequence conflict" description="In Ref. 5; BAA92041." evidence="26" ref="5">
    <original>Q</original>
    <variation>R</variation>
    <location>
        <position position="370"/>
    </location>
</feature>
<feature type="sequence conflict" description="In Ref. 5; BAG65311." evidence="26" ref="5">
    <original>M</original>
    <variation>I</variation>
    <location>
        <position position="453"/>
    </location>
</feature>
<proteinExistence type="evidence at protein level"/>
<reference key="1">
    <citation type="journal article" date="2001" name="Mol. Membr. Biol.">
        <title>The ENT family of eukaryote nucleoside and nucleobase transporters: recent advances in the investigation of structure/function relationships and the identification of novel isoforms.</title>
        <authorList>
            <person name="Hyde R.J."/>
            <person name="Cass C.E."/>
            <person name="Young J.D."/>
            <person name="Baldwin S.A."/>
        </authorList>
    </citation>
    <scope>NUCLEOTIDE SEQUENCE [MRNA] (ISOFORM 1)</scope>
    <scope>VARIANTS PHE-158; ILE-239 AND VAL-326</scope>
    <source>
        <tissue>Placenta</tissue>
    </source>
</reference>
<reference key="2">
    <citation type="journal article" date="2002" name="Nucleic Acids Res.">
        <title>Comparative genomic analysis of equilibrative nucleoside transporters suggests conserved protein structure despite limited sequence identity.</title>
        <authorList>
            <person name="Sankar N."/>
            <person name="Machado J."/>
            <person name="Abdulla P."/>
            <person name="Hilliker A.J."/>
            <person name="Coe I.R."/>
        </authorList>
    </citation>
    <scope>NUCLEOTIDE SEQUENCE [GENOMIC DNA]</scope>
</reference>
<reference key="3">
    <citation type="submission" date="2003-04" db="EMBL/GenBank/DDBJ databases">
        <title>Expression of human equilibrative nucleoside transporter-3 confers cellular resistance to nucleoside drugs.</title>
        <authorList>
            <person name="Tse C.-M."/>
            <person name="Ward J.L."/>
            <person name="Toan S.-V."/>
            <person name="Leung G.P.H."/>
            <person name="To K.K.W."/>
        </authorList>
    </citation>
    <scope>NUCLEOTIDE SEQUENCE [MRNA] (ISOFORM 1)</scope>
    <scope>VARIANTS PHE-158; ILE-239 AND VAL-326</scope>
    <source>
        <tissue>Intestine</tissue>
    </source>
</reference>
<reference key="4">
    <citation type="journal article" date="2003" name="Genome Res.">
        <title>The secreted protein discovery initiative (SPDI), a large-scale effort to identify novel human secreted and transmembrane proteins: a bioinformatics assessment.</title>
        <authorList>
            <person name="Clark H.F."/>
            <person name="Gurney A.L."/>
            <person name="Abaya E."/>
            <person name="Baker K."/>
            <person name="Baldwin D.T."/>
            <person name="Brush J."/>
            <person name="Chen J."/>
            <person name="Chow B."/>
            <person name="Chui C."/>
            <person name="Crowley C."/>
            <person name="Currell B."/>
            <person name="Deuel B."/>
            <person name="Dowd P."/>
            <person name="Eaton D."/>
            <person name="Foster J.S."/>
            <person name="Grimaldi C."/>
            <person name="Gu Q."/>
            <person name="Hass P.E."/>
            <person name="Heldens S."/>
            <person name="Huang A."/>
            <person name="Kim H.S."/>
            <person name="Klimowski L."/>
            <person name="Jin Y."/>
            <person name="Johnson S."/>
            <person name="Lee J."/>
            <person name="Lewis L."/>
            <person name="Liao D."/>
            <person name="Mark M.R."/>
            <person name="Robbie E."/>
            <person name="Sanchez C."/>
            <person name="Schoenfeld J."/>
            <person name="Seshagiri S."/>
            <person name="Simmons L."/>
            <person name="Singh J."/>
            <person name="Smith V."/>
            <person name="Stinson J."/>
            <person name="Vagts A."/>
            <person name="Vandlen R.L."/>
            <person name="Watanabe C."/>
            <person name="Wieand D."/>
            <person name="Woods K."/>
            <person name="Xie M.-H."/>
            <person name="Yansura D.G."/>
            <person name="Yi S."/>
            <person name="Yu G."/>
            <person name="Yuan J."/>
            <person name="Zhang M."/>
            <person name="Zhang Z."/>
            <person name="Goddard A.D."/>
            <person name="Wood W.I."/>
            <person name="Godowski P.J."/>
            <person name="Gray A.M."/>
        </authorList>
    </citation>
    <scope>NUCLEOTIDE SEQUENCE [LARGE SCALE MRNA] (ISOFORM 1)</scope>
    <scope>VARIANTS GLY-18; ILE-239 AND VAL-326</scope>
</reference>
<reference key="5">
    <citation type="journal article" date="2004" name="Nat. Genet.">
        <title>Complete sequencing and characterization of 21,243 full-length human cDNAs.</title>
        <authorList>
            <person name="Ota T."/>
            <person name="Suzuki Y."/>
            <person name="Nishikawa T."/>
            <person name="Otsuki T."/>
            <person name="Sugiyama T."/>
            <person name="Irie R."/>
            <person name="Wakamatsu A."/>
            <person name="Hayashi K."/>
            <person name="Sato H."/>
            <person name="Nagai K."/>
            <person name="Kimura K."/>
            <person name="Makita H."/>
            <person name="Sekine M."/>
            <person name="Obayashi M."/>
            <person name="Nishi T."/>
            <person name="Shibahara T."/>
            <person name="Tanaka T."/>
            <person name="Ishii S."/>
            <person name="Yamamoto J."/>
            <person name="Saito K."/>
            <person name="Kawai Y."/>
            <person name="Isono Y."/>
            <person name="Nakamura Y."/>
            <person name="Nagahari K."/>
            <person name="Murakami K."/>
            <person name="Yasuda T."/>
            <person name="Iwayanagi T."/>
            <person name="Wagatsuma M."/>
            <person name="Shiratori A."/>
            <person name="Sudo H."/>
            <person name="Hosoiri T."/>
            <person name="Kaku Y."/>
            <person name="Kodaira H."/>
            <person name="Kondo H."/>
            <person name="Sugawara M."/>
            <person name="Takahashi M."/>
            <person name="Kanda K."/>
            <person name="Yokoi T."/>
            <person name="Furuya T."/>
            <person name="Kikkawa E."/>
            <person name="Omura Y."/>
            <person name="Abe K."/>
            <person name="Kamihara K."/>
            <person name="Katsuta N."/>
            <person name="Sato K."/>
            <person name="Tanikawa M."/>
            <person name="Yamazaki M."/>
            <person name="Ninomiya K."/>
            <person name="Ishibashi T."/>
            <person name="Yamashita H."/>
            <person name="Murakawa K."/>
            <person name="Fujimori K."/>
            <person name="Tanai H."/>
            <person name="Kimata M."/>
            <person name="Watanabe M."/>
            <person name="Hiraoka S."/>
            <person name="Chiba Y."/>
            <person name="Ishida S."/>
            <person name="Ono Y."/>
            <person name="Takiguchi S."/>
            <person name="Watanabe S."/>
            <person name="Yosida M."/>
            <person name="Hotuta T."/>
            <person name="Kusano J."/>
            <person name="Kanehori K."/>
            <person name="Takahashi-Fujii A."/>
            <person name="Hara H."/>
            <person name="Tanase T.-O."/>
            <person name="Nomura Y."/>
            <person name="Togiya S."/>
            <person name="Komai F."/>
            <person name="Hara R."/>
            <person name="Takeuchi K."/>
            <person name="Arita M."/>
            <person name="Imose N."/>
            <person name="Musashino K."/>
            <person name="Yuuki H."/>
            <person name="Oshima A."/>
            <person name="Sasaki N."/>
            <person name="Aotsuka S."/>
            <person name="Yoshikawa Y."/>
            <person name="Matsunawa H."/>
            <person name="Ichihara T."/>
            <person name="Shiohata N."/>
            <person name="Sano S."/>
            <person name="Moriya S."/>
            <person name="Momiyama H."/>
            <person name="Satoh N."/>
            <person name="Takami S."/>
            <person name="Terashima Y."/>
            <person name="Suzuki O."/>
            <person name="Nakagawa S."/>
            <person name="Senoh A."/>
            <person name="Mizoguchi H."/>
            <person name="Goto Y."/>
            <person name="Shimizu F."/>
            <person name="Wakebe H."/>
            <person name="Hishigaki H."/>
            <person name="Watanabe T."/>
            <person name="Sugiyama A."/>
            <person name="Takemoto M."/>
            <person name="Kawakami B."/>
            <person name="Yamazaki M."/>
            <person name="Watanabe K."/>
            <person name="Kumagai A."/>
            <person name="Itakura S."/>
            <person name="Fukuzumi Y."/>
            <person name="Fujimori Y."/>
            <person name="Komiyama M."/>
            <person name="Tashiro H."/>
            <person name="Tanigami A."/>
            <person name="Fujiwara T."/>
            <person name="Ono T."/>
            <person name="Yamada K."/>
            <person name="Fujii Y."/>
            <person name="Ozaki K."/>
            <person name="Hirao M."/>
            <person name="Ohmori Y."/>
            <person name="Kawabata A."/>
            <person name="Hikiji T."/>
            <person name="Kobatake N."/>
            <person name="Inagaki H."/>
            <person name="Ikema Y."/>
            <person name="Okamoto S."/>
            <person name="Okitani R."/>
            <person name="Kawakami T."/>
            <person name="Noguchi S."/>
            <person name="Itoh T."/>
            <person name="Shigeta K."/>
            <person name="Senba T."/>
            <person name="Matsumura K."/>
            <person name="Nakajima Y."/>
            <person name="Mizuno T."/>
            <person name="Morinaga M."/>
            <person name="Sasaki M."/>
            <person name="Togashi T."/>
            <person name="Oyama M."/>
            <person name="Hata H."/>
            <person name="Watanabe M."/>
            <person name="Komatsu T."/>
            <person name="Mizushima-Sugano J."/>
            <person name="Satoh T."/>
            <person name="Shirai Y."/>
            <person name="Takahashi Y."/>
            <person name="Nakagawa K."/>
            <person name="Okumura K."/>
            <person name="Nagase T."/>
            <person name="Nomura N."/>
            <person name="Kikuchi H."/>
            <person name="Masuho Y."/>
            <person name="Yamashita R."/>
            <person name="Nakai K."/>
            <person name="Yada T."/>
            <person name="Nakamura Y."/>
            <person name="Ohara O."/>
            <person name="Isogai T."/>
            <person name="Sugano S."/>
        </authorList>
    </citation>
    <scope>NUCLEOTIDE SEQUENCE [LARGE SCALE MRNA] (ISOFORMS 1 AND 2)</scope>
    <scope>VARIANTS PHE-158; ILE-239 AND VAL-326</scope>
    <source>
        <tissue>Placenta</tissue>
        <tissue>Skin fibroblast</tissue>
        <tissue>Uterus</tissue>
    </source>
</reference>
<reference key="6">
    <citation type="journal article" date="2004" name="Nature">
        <title>The DNA sequence and comparative analysis of human chromosome 10.</title>
        <authorList>
            <person name="Deloukas P."/>
            <person name="Earthrowl M.E."/>
            <person name="Grafham D.V."/>
            <person name="Rubenfield M."/>
            <person name="French L."/>
            <person name="Steward C.A."/>
            <person name="Sims S.K."/>
            <person name="Jones M.C."/>
            <person name="Searle S."/>
            <person name="Scott C."/>
            <person name="Howe K."/>
            <person name="Hunt S.E."/>
            <person name="Andrews T.D."/>
            <person name="Gilbert J.G.R."/>
            <person name="Swarbreck D."/>
            <person name="Ashurst J.L."/>
            <person name="Taylor A."/>
            <person name="Battles J."/>
            <person name="Bird C.P."/>
            <person name="Ainscough R."/>
            <person name="Almeida J.P."/>
            <person name="Ashwell R.I.S."/>
            <person name="Ambrose K.D."/>
            <person name="Babbage A.K."/>
            <person name="Bagguley C.L."/>
            <person name="Bailey J."/>
            <person name="Banerjee R."/>
            <person name="Bates K."/>
            <person name="Beasley H."/>
            <person name="Bray-Allen S."/>
            <person name="Brown A.J."/>
            <person name="Brown J.Y."/>
            <person name="Burford D.C."/>
            <person name="Burrill W."/>
            <person name="Burton J."/>
            <person name="Cahill P."/>
            <person name="Camire D."/>
            <person name="Carter N.P."/>
            <person name="Chapman J.C."/>
            <person name="Clark S.Y."/>
            <person name="Clarke G."/>
            <person name="Clee C.M."/>
            <person name="Clegg S."/>
            <person name="Corby N."/>
            <person name="Coulson A."/>
            <person name="Dhami P."/>
            <person name="Dutta I."/>
            <person name="Dunn M."/>
            <person name="Faulkner L."/>
            <person name="Frankish A."/>
            <person name="Frankland J.A."/>
            <person name="Garner P."/>
            <person name="Garnett J."/>
            <person name="Gribble S."/>
            <person name="Griffiths C."/>
            <person name="Grocock R."/>
            <person name="Gustafson E."/>
            <person name="Hammond S."/>
            <person name="Harley J.L."/>
            <person name="Hart E."/>
            <person name="Heath P.D."/>
            <person name="Ho T.P."/>
            <person name="Hopkins B."/>
            <person name="Horne J."/>
            <person name="Howden P.J."/>
            <person name="Huckle E."/>
            <person name="Hynds C."/>
            <person name="Johnson C."/>
            <person name="Johnson D."/>
            <person name="Kana A."/>
            <person name="Kay M."/>
            <person name="Kimberley A.M."/>
            <person name="Kershaw J.K."/>
            <person name="Kokkinaki M."/>
            <person name="Laird G.K."/>
            <person name="Lawlor S."/>
            <person name="Lee H.M."/>
            <person name="Leongamornlert D.A."/>
            <person name="Laird G."/>
            <person name="Lloyd C."/>
            <person name="Lloyd D.M."/>
            <person name="Loveland J."/>
            <person name="Lovell J."/>
            <person name="McLaren S."/>
            <person name="McLay K.E."/>
            <person name="McMurray A."/>
            <person name="Mashreghi-Mohammadi M."/>
            <person name="Matthews L."/>
            <person name="Milne S."/>
            <person name="Nickerson T."/>
            <person name="Nguyen M."/>
            <person name="Overton-Larty E."/>
            <person name="Palmer S.A."/>
            <person name="Pearce A.V."/>
            <person name="Peck A.I."/>
            <person name="Pelan S."/>
            <person name="Phillimore B."/>
            <person name="Porter K."/>
            <person name="Rice C.M."/>
            <person name="Rogosin A."/>
            <person name="Ross M.T."/>
            <person name="Sarafidou T."/>
            <person name="Sehra H.K."/>
            <person name="Shownkeen R."/>
            <person name="Skuce C.D."/>
            <person name="Smith M."/>
            <person name="Standring L."/>
            <person name="Sycamore N."/>
            <person name="Tester J."/>
            <person name="Thorpe A."/>
            <person name="Torcasso W."/>
            <person name="Tracey A."/>
            <person name="Tromans A."/>
            <person name="Tsolas J."/>
            <person name="Wall M."/>
            <person name="Walsh J."/>
            <person name="Wang H."/>
            <person name="Weinstock K."/>
            <person name="West A.P."/>
            <person name="Willey D.L."/>
            <person name="Whitehead S.L."/>
            <person name="Wilming L."/>
            <person name="Wray P.W."/>
            <person name="Young L."/>
            <person name="Chen Y."/>
            <person name="Lovering R.C."/>
            <person name="Moschonas N.K."/>
            <person name="Siebert R."/>
            <person name="Fechtel K."/>
            <person name="Bentley D."/>
            <person name="Durbin R.M."/>
            <person name="Hubbard T."/>
            <person name="Doucette-Stamm L."/>
            <person name="Beck S."/>
            <person name="Smith D.R."/>
            <person name="Rogers J."/>
        </authorList>
    </citation>
    <scope>NUCLEOTIDE SEQUENCE [LARGE SCALE GENOMIC DNA]</scope>
</reference>
<reference key="7">
    <citation type="journal article" date="2004" name="Genome Res.">
        <title>The status, quality, and expansion of the NIH full-length cDNA project: the Mammalian Gene Collection (MGC).</title>
        <authorList>
            <consortium name="The MGC Project Team"/>
        </authorList>
    </citation>
    <scope>NUCLEOTIDE SEQUENCE [LARGE SCALE MRNA] (ISOFORM 1)</scope>
    <scope>VARIANTS PHE-158; ILE-239 AND VAL-326</scope>
    <source>
        <tissue>Eye</tissue>
        <tissue>Kidney</tissue>
    </source>
</reference>
<reference key="8">
    <citation type="journal article" date="2005" name="J. Biol. Chem.">
        <title>Functional characterization of novel human and mouse equilibrative nucleoside transporters (hENT3 and mENT3) located in intracellular membranes.</title>
        <authorList>
            <person name="Baldwin S.A."/>
            <person name="Yao S.Y.M."/>
            <person name="Hyde R.J."/>
            <person name="Ng A.M.L."/>
            <person name="Foppolo S."/>
            <person name="Barnes K."/>
            <person name="Ritzel M.W.L."/>
            <person name="Cass C.E."/>
            <person name="Young J.D."/>
        </authorList>
    </citation>
    <scope>FUNCTION</scope>
    <scope>TRANSPORTER ACTIVITY</scope>
    <scope>BIOPHYSICOCHEMICAL PROPERTIES</scope>
    <scope>SUBCELLULAR LOCATION</scope>
    <scope>TISSUE SPECIFICITY</scope>
    <scope>DOMAIN</scope>
    <scope>MISCELLANEOUS</scope>
    <scope>MUTAGENESIS OF LEU-31 AND LEU-32</scope>
</reference>
<reference key="9">
    <citation type="journal article" date="2007" name="Traffic">
        <title>Integral and associated lysosomal membrane proteins.</title>
        <authorList>
            <person name="Schroeder B."/>
            <person name="Wrocklage C."/>
            <person name="Pan C."/>
            <person name="Jaeger R."/>
            <person name="Koesters B."/>
            <person name="Schaefer H."/>
            <person name="Elsaesser H.-P."/>
            <person name="Mann M."/>
            <person name="Hasilik A."/>
        </authorList>
    </citation>
    <scope>SUBCELLULAR LOCATION [LARGE SCALE ANALYSIS]</scope>
    <source>
        <tissue>Placenta</tissue>
    </source>
</reference>
<reference key="10">
    <citation type="journal article" date="2009" name="Am. J. Physiol.">
        <title>Facilitated mitochondrial import of antiviral and anticancer nucleoside drugs by human equilibrative nucleoside transporter-3.</title>
        <authorList>
            <person name="Govindarajan R."/>
            <person name="Leung G.P."/>
            <person name="Zhou M."/>
            <person name="Tse C.M."/>
            <person name="Wang J."/>
            <person name="Unadkat J.D."/>
        </authorList>
    </citation>
    <scope>FUNCTION</scope>
    <scope>TRANSPORTER ACTIVITY</scope>
    <scope>BIOPHYSICOCHEMICAL PROPERTIES</scope>
    <scope>SUBCELLULAR LOCATION</scope>
    <scope>TISSUE SPECIFICITY</scope>
    <scope>MISCELLANEOUS</scope>
</reference>
<reference key="11">
    <citation type="journal article" date="2010" name="J. Biol. Chem.">
        <title>Human equilibrative nucleoside transporter-3 (hENT3) spectrum disorder mutations impair nucleoside transport, protein localization, and stability.</title>
        <authorList>
            <person name="Kang N."/>
            <person name="Jun A.H."/>
            <person name="Bhutia Y.D."/>
            <person name="Kannan N."/>
            <person name="Unadkat J.D."/>
            <person name="Govindarajan R."/>
        </authorList>
    </citation>
    <scope>FUNCTION</scope>
    <scope>TRANSPORTER ACTIVITY</scope>
    <scope>BIOPHYSICOCHEMICAL PROPERTIES</scope>
    <scope>MISCELLANEOUS</scope>
    <scope>MUTAGENESIS OF GLY-427</scope>
    <scope>CHARACTERIZATION OF VARIANTS HLAS ARG-116; SER-427; ARG-437 AND ARG-449</scope>
</reference>
<reference key="12">
    <citation type="journal article" date="2012" name="Science">
        <title>Equilibrative nucleoside transporter 3 deficiency perturbs lysosome function and macrophage homeostasis.</title>
        <authorList>
            <person name="Hsu C.L."/>
            <person name="Lin W."/>
            <person name="Seshasayee D."/>
            <person name="Chen Y.H."/>
            <person name="Ding X."/>
            <person name="Lin Z."/>
            <person name="Suto E."/>
            <person name="Huang Z."/>
            <person name="Lee W.P."/>
            <person name="Park H."/>
            <person name="Xu M."/>
            <person name="Sun M."/>
            <person name="Rangell L."/>
            <person name="Lutman J.L."/>
            <person name="Ulufatu S."/>
            <person name="Stefanich E."/>
            <person name="Chalouni C."/>
            <person name="Sagolla M."/>
            <person name="Diehl L."/>
            <person name="Fielder P."/>
            <person name="Dean B."/>
            <person name="Balazs M."/>
            <person name="Martin F."/>
        </authorList>
    </citation>
    <scope>TISSUE SPECIFICITY</scope>
</reference>
<reference key="13">
    <citation type="journal article" date="2013" name="J. Proteome Res.">
        <title>Toward a comprehensive characterization of a human cancer cell phosphoproteome.</title>
        <authorList>
            <person name="Zhou H."/>
            <person name="Di Palma S."/>
            <person name="Preisinger C."/>
            <person name="Peng M."/>
            <person name="Polat A.N."/>
            <person name="Heck A.J."/>
            <person name="Mohammed S."/>
        </authorList>
    </citation>
    <scope>PHOSPHORYLATION [LARGE SCALE ANALYSIS] AT SER-23</scope>
    <scope>IDENTIFICATION BY MASS SPECTROMETRY [LARGE SCALE ANALYSIS]</scope>
    <source>
        <tissue>Erythroleukemia</tissue>
    </source>
</reference>
<reference key="14">
    <citation type="journal article" date="2017" name="J. Biol. Chem.">
        <title>Molecular determinants of acidic pH-dependent transport of human equilibrative nucleoside transporter 3.</title>
        <authorList>
            <person name="Rahman M.F."/>
            <person name="Askwith C."/>
            <person name="Govindarajan R."/>
        </authorList>
    </citation>
    <scope>FUNCTION</scope>
    <scope>TRANSPORTER ACTIVITY</scope>
    <scope>BIOPHYSICOCHEMICAL PROPERTIES</scope>
    <scope>MISCELLANEOUS</scope>
    <scope>MUTAGENESIS OF ASP-48; TYR-54; GLU-76; SER-86; GLU-92; ASP-93; GLU-95; ASP-98; GLU-104; HIS-132; ASP-156; TRP-160; THR-180; SER-184; TYR-187; THR-190; ASP-219; ASP-225; PHE-233; CYS-244; GLU-255; HIS-268; GLU-273; GLU-274; GLU-275; ASP-279; ASP-292; HIS-294; PHE-317; GLU-331; ASP-359; TYR-398; HIS-403; ASP-412; SER-419; GLU-444; GLU-447; THR-469 AND HIS-473</scope>
</reference>
<reference key="15">
    <citation type="journal article" date="2008" name="Am. J. Hum. Genet.">
        <title>The H syndrome is caused by mutations in the nucleoside transporter hENT3.</title>
        <authorList>
            <person name="Molho-Pessach V."/>
            <person name="Lerer I."/>
            <person name="Abeliovich D."/>
            <person name="Agha Z."/>
            <person name="Abu Libdeh A."/>
            <person name="Broshtilova V."/>
            <person name="Elpeleg O."/>
            <person name="Zlotogorski A."/>
        </authorList>
    </citation>
    <scope>VARIANTS HLAS SER-427 AND ARG-437</scope>
</reference>
<reference key="16">
    <citation type="journal article" date="2009" name="Hum. Mol. Genet.">
        <title>SLC29A3 gene is mutated in pigmented hypertrichosis with insulin-dependent diabetes mellitus syndrome and interacts with the insulin signaling pathway.</title>
        <authorList>
            <person name="Cliffe S.T."/>
            <person name="Kramer J.M."/>
            <person name="Hussain K."/>
            <person name="Robben J.H."/>
            <person name="de Jong E.K."/>
            <person name="de Brouwer A.P."/>
            <person name="Nibbeling E."/>
            <person name="Kamsteeg E.J."/>
            <person name="Wong M."/>
            <person name="Prendiville J."/>
            <person name="James C."/>
            <person name="Padidela R."/>
            <person name="Becknell C."/>
            <person name="van Bokhoven H."/>
            <person name="Deen P.M."/>
            <person name="Hennekam R.C."/>
            <person name="Lindeman R."/>
            <person name="Schenck A."/>
            <person name="Roscioli T."/>
            <person name="Buckley M.F."/>
        </authorList>
    </citation>
    <scope>VARIANTS HLAS ARG-116; ARG-437 AND ARG-449</scope>
</reference>
<reference key="17">
    <citation type="journal article" date="2010" name="Br. J. Dermatol.">
        <title>H syndrome: novel and recurrent mutations in SLC29A3.</title>
        <authorList>
            <person name="Priya T.P."/>
            <person name="Philip N."/>
            <person name="Molho-Pessach V."/>
            <person name="Busa T."/>
            <person name="Dalal A."/>
            <person name="Zlotogorski A."/>
        </authorList>
    </citation>
    <scope>VARIANTS HLAS CYS-134 AND ARG-437</scope>
</reference>
<reference key="18">
    <citation type="journal article" date="2010" name="Eur. J. Med. Genet.">
        <title>Expanding the clinical spectrum of SLC29A3 gene defects.</title>
        <authorList>
            <person name="Spiegel R."/>
            <person name="Cliffe S.T."/>
            <person name="Buckley M.F."/>
            <person name="Crow Y.J."/>
            <person name="Urquhart J."/>
            <person name="Horovitz Y."/>
            <person name="Tenenbaum-Rakover Y."/>
            <person name="Newman W.G."/>
            <person name="Donnai D."/>
            <person name="Shalev S.A."/>
        </authorList>
    </citation>
    <scope>VARIANTS HLAS SER-427 AND ARG-437</scope>
</reference>
<reference key="19">
    <citation type="journal article" date="2010" name="Int. J. Pediatr. Otorhinolaryngol.">
        <title>Early-onset sensorineural hearing loss is a prominent feature of H syndrome.</title>
        <authorList>
            <person name="Ramot Y."/>
            <person name="Sayama K."/>
            <person name="Sheffer R."/>
            <person name="Doviner V."/>
            <person name="Hiller N."/>
            <person name="Kaufmann-Yehezkely M."/>
            <person name="Zlotogorski A."/>
        </authorList>
    </citation>
    <scope>VARIANTS HLAS ARG-184 AND ARG-437</scope>
</reference>
<reference key="20">
    <citation type="journal article" date="2010" name="J. Dermatol. Sci.">
        <title>The H syndrome: two novel mutations affecting the same amino acid residue of hENT3.</title>
        <authorList>
            <person name="Molho-Pessach V."/>
            <person name="Suarez J."/>
            <person name="Perrin C."/>
            <person name="Chiaverini C."/>
            <person name="Doviner V."/>
            <person name="Tristan-Clavijo E."/>
            <person name="Colmenero I."/>
            <person name="Giuliano F."/>
            <person name="Torrelo A."/>
            <person name="Zlotogorski A."/>
        </authorList>
    </citation>
    <scope>VARIANTS HLAS TRP-363 AND GLN-363</scope>
</reference>
<reference key="21">
    <citation type="journal article" date="2010" name="PLoS Genet.">
        <title>Mutations in SLC29A3, encoding an equilibrative nucleoside transporter ENT3, cause a familial histiocytosis syndrome (Faisalabad histiocytosis) and familial Rosai-Dorfman disease.</title>
        <authorList>
            <person name="Morgan N.V."/>
            <person name="Morris M.R."/>
            <person name="Cangul H."/>
            <person name="Gleeson D."/>
            <person name="Straatman-Iwanowska A."/>
            <person name="Davies N."/>
            <person name="Keenan S."/>
            <person name="Pasha S."/>
            <person name="Rahman F."/>
            <person name="Gentle D."/>
            <person name="Vreeswijk M.P."/>
            <person name="Devilee P."/>
            <person name="Knowles M.A."/>
            <person name="Ceylaner S."/>
            <person name="Trembath R.C."/>
            <person name="Dalence C."/>
            <person name="Kismet E."/>
            <person name="Koseoglu V."/>
            <person name="Rossbach H.C."/>
            <person name="Gissen P."/>
            <person name="Tannahill D."/>
            <person name="Maher E.R."/>
        </authorList>
    </citation>
    <scope>VARIANT HLAS ARG-437</scope>
    <scope>VARIANTS VAL-163; PRO-281 AND MET-407</scope>
</reference>
<reference key="22">
    <citation type="journal article" date="2012" name="Eur. J. Med. Genet.">
        <title>Progressive hearing loss associated with a unique cervical node due to a homozygous SLC29A3 mutation: a very mild phenotype.</title>
        <authorList>
            <person name="Jonard L."/>
            <person name="Couloigner V."/>
            <person name="Pierrot S."/>
            <person name="Louha M."/>
            <person name="Gherbi S."/>
            <person name="Denoyelle F."/>
            <person name="Marlin S."/>
        </authorList>
    </citation>
    <scope>VARIANT HLAS GLN-363</scope>
</reference>